<reference key="1">
    <citation type="submission" date="2008-12" db="EMBL/GenBank/DDBJ databases">
        <title>Complete sequence of chromosome of Methylobacterium chloromethanicum CM4.</title>
        <authorList>
            <consortium name="US DOE Joint Genome Institute"/>
            <person name="Lucas S."/>
            <person name="Copeland A."/>
            <person name="Lapidus A."/>
            <person name="Glavina del Rio T."/>
            <person name="Dalin E."/>
            <person name="Tice H."/>
            <person name="Bruce D."/>
            <person name="Goodwin L."/>
            <person name="Pitluck S."/>
            <person name="Chertkov O."/>
            <person name="Brettin T."/>
            <person name="Detter J.C."/>
            <person name="Han C."/>
            <person name="Larimer F."/>
            <person name="Land M."/>
            <person name="Hauser L."/>
            <person name="Kyrpides N."/>
            <person name="Mikhailova N."/>
            <person name="Marx C."/>
            <person name="Richardson P."/>
        </authorList>
    </citation>
    <scope>NUCLEOTIDE SEQUENCE [LARGE SCALE GENOMIC DNA]</scope>
    <source>
        <strain>CM4 / NCIMB 13688</strain>
    </source>
</reference>
<feature type="chain" id="PRO_1000165893" description="Large ribosomal subunit protein uL3">
    <location>
        <begin position="1"/>
        <end position="246"/>
    </location>
</feature>
<feature type="region of interest" description="Disordered" evidence="2">
    <location>
        <begin position="140"/>
        <end position="162"/>
    </location>
</feature>
<feature type="region of interest" description="Disordered" evidence="2">
    <location>
        <begin position="214"/>
        <end position="246"/>
    </location>
</feature>
<feature type="compositionally biased region" description="Low complexity" evidence="2">
    <location>
        <begin position="234"/>
        <end position="246"/>
    </location>
</feature>
<feature type="modified residue" description="N5-methylglutamine" evidence="1">
    <location>
        <position position="151"/>
    </location>
</feature>
<name>RL3_METC4</name>
<protein>
    <recommendedName>
        <fullName evidence="1">Large ribosomal subunit protein uL3</fullName>
    </recommendedName>
    <alternativeName>
        <fullName evidence="3">50S ribosomal protein L3</fullName>
    </alternativeName>
</protein>
<sequence>MRSGVIARKVGMTRVFTDAGEHVPVTVLQIDQCQVVAHRTTEKDGYVALQVGVGKAKVKNVSQAERGRFAVAKVEPKKKLAEFRVSEDALIPVGAEITADHFIPGQFVDVTGTSTGKGFAGGMKRWNFGGLRATHGVSISHRSIGSTGGRQDPGKTFKNKKMPGHLGVERVTTQNLKVVRTDPERGLILVEGAVPGVAGGWIQVRDSVKRKLPADVPLPGKFRENGSAGASQIEAAPEAPASEENA</sequence>
<comment type="function">
    <text evidence="1">One of the primary rRNA binding proteins, it binds directly near the 3'-end of the 23S rRNA, where it nucleates assembly of the 50S subunit.</text>
</comment>
<comment type="subunit">
    <text evidence="1">Part of the 50S ribosomal subunit. Forms a cluster with proteins L14 and L19.</text>
</comment>
<comment type="PTM">
    <text evidence="1">Methylated by PrmB.</text>
</comment>
<comment type="similarity">
    <text evidence="1">Belongs to the universal ribosomal protein uL3 family.</text>
</comment>
<evidence type="ECO:0000255" key="1">
    <source>
        <dbReference type="HAMAP-Rule" id="MF_01325"/>
    </source>
</evidence>
<evidence type="ECO:0000256" key="2">
    <source>
        <dbReference type="SAM" id="MobiDB-lite"/>
    </source>
</evidence>
<evidence type="ECO:0000305" key="3"/>
<dbReference type="EMBL" id="CP001298">
    <property type="protein sequence ID" value="ACK83282.1"/>
    <property type="molecule type" value="Genomic_DNA"/>
</dbReference>
<dbReference type="RefSeq" id="WP_015950879.1">
    <property type="nucleotide sequence ID" value="NC_011757.1"/>
</dbReference>
<dbReference type="SMR" id="B7L0R1"/>
<dbReference type="KEGG" id="mch:Mchl_2440"/>
<dbReference type="HOGENOM" id="CLU_044142_2_0_5"/>
<dbReference type="Proteomes" id="UP000002385">
    <property type="component" value="Chromosome"/>
</dbReference>
<dbReference type="GO" id="GO:0022625">
    <property type="term" value="C:cytosolic large ribosomal subunit"/>
    <property type="evidence" value="ECO:0007669"/>
    <property type="project" value="TreeGrafter"/>
</dbReference>
<dbReference type="GO" id="GO:0019843">
    <property type="term" value="F:rRNA binding"/>
    <property type="evidence" value="ECO:0007669"/>
    <property type="project" value="UniProtKB-UniRule"/>
</dbReference>
<dbReference type="GO" id="GO:0003735">
    <property type="term" value="F:structural constituent of ribosome"/>
    <property type="evidence" value="ECO:0007669"/>
    <property type="project" value="InterPro"/>
</dbReference>
<dbReference type="GO" id="GO:0006412">
    <property type="term" value="P:translation"/>
    <property type="evidence" value="ECO:0007669"/>
    <property type="project" value="UniProtKB-UniRule"/>
</dbReference>
<dbReference type="FunFam" id="2.40.30.10:FF:000004">
    <property type="entry name" value="50S ribosomal protein L3"/>
    <property type="match status" value="1"/>
</dbReference>
<dbReference type="FunFam" id="3.30.160.810:FF:000001">
    <property type="entry name" value="50S ribosomal protein L3"/>
    <property type="match status" value="1"/>
</dbReference>
<dbReference type="Gene3D" id="3.30.160.810">
    <property type="match status" value="1"/>
</dbReference>
<dbReference type="Gene3D" id="2.40.30.10">
    <property type="entry name" value="Translation factors"/>
    <property type="match status" value="1"/>
</dbReference>
<dbReference type="HAMAP" id="MF_01325_B">
    <property type="entry name" value="Ribosomal_uL3_B"/>
    <property type="match status" value="1"/>
</dbReference>
<dbReference type="InterPro" id="IPR000597">
    <property type="entry name" value="Ribosomal_uL3"/>
</dbReference>
<dbReference type="InterPro" id="IPR019927">
    <property type="entry name" value="Ribosomal_uL3_bac/org-type"/>
</dbReference>
<dbReference type="InterPro" id="IPR019926">
    <property type="entry name" value="Ribosomal_uL3_CS"/>
</dbReference>
<dbReference type="InterPro" id="IPR009000">
    <property type="entry name" value="Transl_B-barrel_sf"/>
</dbReference>
<dbReference type="NCBIfam" id="TIGR03625">
    <property type="entry name" value="L3_bact"/>
    <property type="match status" value="1"/>
</dbReference>
<dbReference type="PANTHER" id="PTHR11229">
    <property type="entry name" value="50S RIBOSOMAL PROTEIN L3"/>
    <property type="match status" value="1"/>
</dbReference>
<dbReference type="PANTHER" id="PTHR11229:SF16">
    <property type="entry name" value="LARGE RIBOSOMAL SUBUNIT PROTEIN UL3C"/>
    <property type="match status" value="1"/>
</dbReference>
<dbReference type="Pfam" id="PF00297">
    <property type="entry name" value="Ribosomal_L3"/>
    <property type="match status" value="1"/>
</dbReference>
<dbReference type="SUPFAM" id="SSF50447">
    <property type="entry name" value="Translation proteins"/>
    <property type="match status" value="1"/>
</dbReference>
<dbReference type="PROSITE" id="PS00474">
    <property type="entry name" value="RIBOSOMAL_L3"/>
    <property type="match status" value="1"/>
</dbReference>
<organism>
    <name type="scientific">Methylorubrum extorquens (strain CM4 / NCIMB 13688)</name>
    <name type="common">Methylobacterium extorquens</name>
    <dbReference type="NCBI Taxonomy" id="440085"/>
    <lineage>
        <taxon>Bacteria</taxon>
        <taxon>Pseudomonadati</taxon>
        <taxon>Pseudomonadota</taxon>
        <taxon>Alphaproteobacteria</taxon>
        <taxon>Hyphomicrobiales</taxon>
        <taxon>Methylobacteriaceae</taxon>
        <taxon>Methylorubrum</taxon>
    </lineage>
</organism>
<proteinExistence type="inferred from homology"/>
<gene>
    <name evidence="1" type="primary">rplC</name>
    <name type="ordered locus">Mchl_2440</name>
</gene>
<keyword id="KW-0488">Methylation</keyword>
<keyword id="KW-0687">Ribonucleoprotein</keyword>
<keyword id="KW-0689">Ribosomal protein</keyword>
<keyword id="KW-0694">RNA-binding</keyword>
<keyword id="KW-0699">rRNA-binding</keyword>
<accession>B7L0R1</accession>